<name>IAPP_MOUSE</name>
<reference key="1">
    <citation type="journal article" date="1989" name="Proc. Natl. Acad. Sci. U.S.A.">
        <title>Conservation of the sequence of islet amyloid polypeptide in five mammals is consistent with its putative role as an islet hormone.</title>
        <authorList>
            <person name="Nishi M."/>
            <person name="Chan S.J."/>
            <person name="Nagamatsu S."/>
            <person name="Bell G.I."/>
            <person name="Steiner D.F."/>
        </authorList>
    </citation>
    <scope>NUCLEOTIDE SEQUENCE [MRNA]</scope>
</reference>
<reference key="2">
    <citation type="journal article" date="1997" name="J. Mol. Endocrinol.">
        <title>Cloning of mouse islet amyloid polypeptide gene and characterization of its promoter.</title>
        <authorList>
            <person name="Ekawa K."/>
            <person name="Nishi M."/>
            <person name="Ohagi S."/>
            <person name="Sanke T."/>
            <person name="Nanjo K."/>
        </authorList>
    </citation>
    <scope>NUCLEOTIDE SEQUENCE [GENOMIC DNA]</scope>
    <source>
        <strain>DBA/2J</strain>
        <tissue>Liver</tissue>
    </source>
</reference>
<reference key="3">
    <citation type="journal article" date="2004" name="Genome Res.">
        <title>The status, quality, and expansion of the NIH full-length cDNA project: the Mammalian Gene Collection (MGC).</title>
        <authorList>
            <consortium name="The MGC Project Team"/>
        </authorList>
    </citation>
    <scope>NUCLEOTIDE SEQUENCE [LARGE SCALE MRNA]</scope>
    <source>
        <strain>C57BL/6J</strain>
        <tissue>Thymus</tissue>
    </source>
</reference>
<reference key="4">
    <citation type="journal article" date="1989" name="FEBS Lett.">
        <title>Sequence divergence in a specific region of islet amyloid polypeptide (IAPP) explains differences in islet amyloid formation between species.</title>
        <authorList>
            <person name="Betsholtz C."/>
            <person name="Christmansson L."/>
            <person name="Engstroem U."/>
            <person name="Rorsman F."/>
            <person name="Svensson V."/>
            <person name="Johnson K.H."/>
            <person name="Westermark P."/>
        </authorList>
    </citation>
    <scope>NUCLEOTIDE SEQUENCE [MRNA] OF 38-74</scope>
</reference>
<accession>P12968</accession>
<evidence type="ECO:0000250" key="1"/>
<evidence type="ECO:0000250" key="2">
    <source>
        <dbReference type="UniProtKB" id="P10997"/>
    </source>
</evidence>
<evidence type="ECO:0000250" key="3">
    <source>
        <dbReference type="UniProtKB" id="P12969"/>
    </source>
</evidence>
<evidence type="ECO:0000255" key="4"/>
<evidence type="ECO:0000256" key="5">
    <source>
        <dbReference type="SAM" id="MobiDB-lite"/>
    </source>
</evidence>
<evidence type="ECO:0000303" key="6">
    <source>
    </source>
</evidence>
<evidence type="ECO:0000305" key="7"/>
<evidence type="ECO:0000312" key="8">
    <source>
        <dbReference type="MGI" id="MGI:96382"/>
    </source>
</evidence>
<gene>
    <name evidence="8" type="primary">Iapp</name>
</gene>
<comment type="function">
    <text evidence="2 3">Amylin/IAPP is a glucoregulatory peptide hormone that plays an important role in the regulation of energy homeostasis (By similarity). Selectively inhibits insulin-stimulated glucose utilization and glycogen deposition in muscle, while not affecting adipocyte glucose metabolism. IAPP function is mediated by the CALCR-RAMPs (AMYRs) receptor complexes. Amylin can also bind CALCR receptor in the absence of RAMPs, although it is more selective for AMYRs (By similarity).</text>
</comment>
<comment type="subunit">
    <text evidence="2 3">Can form homodimers. Interacts with IDE and INS. Interaction with INS inhibits homodimerization and fibril formation (By similarity).</text>
</comment>
<comment type="subcellular location">
    <subcellularLocation>
        <location evidence="2">Secreted</location>
    </subcellularLocation>
</comment>
<comment type="domain">
    <text>The mature protein is largely unstructured in the absence of a cognate ligand, but contrary to the human protein, it does not easily form fibrillar aggregates.</text>
</comment>
<comment type="similarity">
    <text evidence="7">Belongs to the calcitonin family.</text>
</comment>
<sequence length="93" mass="10022">MMCISKLPAVLLILSVALNHLRATPVRSGSNPQMDKRKCNTATCATQRLANFLVRSSNNLGPVLPPTNVGSNTYGKRNAAGDPNRESLDFLLV</sequence>
<protein>
    <recommendedName>
        <fullName evidence="6">Islet amyloid polypeptide</fullName>
        <shortName evidence="2">IAPP</shortName>
    </recommendedName>
    <alternativeName>
        <fullName evidence="2">Amylin</fullName>
    </alternativeName>
    <alternativeName>
        <fullName evidence="2">Diabetes-associated peptide</fullName>
        <shortName>DAP</shortName>
    </alternativeName>
</protein>
<dbReference type="EMBL" id="M25389">
    <property type="protein sequence ID" value="AAA37874.1"/>
    <property type="molecule type" value="mRNA"/>
</dbReference>
<dbReference type="EMBL" id="D31820">
    <property type="protein sequence ID" value="BAA22051.1"/>
    <property type="molecule type" value="Genomic_DNA"/>
</dbReference>
<dbReference type="EMBL" id="BC027527">
    <property type="protein sequence ID" value="AAH27527.1"/>
    <property type="molecule type" value="mRNA"/>
</dbReference>
<dbReference type="CCDS" id="CCDS39694.1"/>
<dbReference type="PIR" id="C33542">
    <property type="entry name" value="C33542"/>
</dbReference>
<dbReference type="RefSeq" id="NP_034621.1">
    <property type="nucleotide sequence ID" value="NM_010491.2"/>
</dbReference>
<dbReference type="BMRB" id="P12968"/>
<dbReference type="SMR" id="P12968"/>
<dbReference type="FunCoup" id="P12968">
    <property type="interactions" value="376"/>
</dbReference>
<dbReference type="IntAct" id="P12968">
    <property type="interactions" value="2"/>
</dbReference>
<dbReference type="STRING" id="10090.ENSMUSP00000043956"/>
<dbReference type="iPTMnet" id="P12968"/>
<dbReference type="PhosphoSitePlus" id="P12968"/>
<dbReference type="PaxDb" id="10090-ENSMUSP00000043956"/>
<dbReference type="ProteomicsDB" id="273084"/>
<dbReference type="Antibodypedia" id="4370">
    <property type="antibodies" value="427 antibodies from 35 providers"/>
</dbReference>
<dbReference type="DNASU" id="15874"/>
<dbReference type="Ensembl" id="ENSMUST00000041993.3">
    <property type="protein sequence ID" value="ENSMUSP00000043956.3"/>
    <property type="gene ID" value="ENSMUSG00000041681.3"/>
</dbReference>
<dbReference type="GeneID" id="15874"/>
<dbReference type="KEGG" id="mmu:15874"/>
<dbReference type="UCSC" id="uc009epb.2">
    <property type="organism name" value="mouse"/>
</dbReference>
<dbReference type="AGR" id="MGI:96382"/>
<dbReference type="CTD" id="3375"/>
<dbReference type="MGI" id="MGI:96382">
    <property type="gene designation" value="Iapp"/>
</dbReference>
<dbReference type="VEuPathDB" id="HostDB:ENSMUSG00000041681"/>
<dbReference type="eggNOG" id="ENOG502S4AQ">
    <property type="taxonomic scope" value="Eukaryota"/>
</dbReference>
<dbReference type="GeneTree" id="ENSGT00510000048671"/>
<dbReference type="HOGENOM" id="CLU_189304_0_0_1"/>
<dbReference type="InParanoid" id="P12968"/>
<dbReference type="OMA" id="CATQRLT"/>
<dbReference type="OrthoDB" id="9898100at2759"/>
<dbReference type="PhylomeDB" id="P12968"/>
<dbReference type="TreeFam" id="TF330783"/>
<dbReference type="Reactome" id="R-MMU-418555">
    <property type="pathway name" value="G alpha (s) signalling events"/>
</dbReference>
<dbReference type="Reactome" id="R-MMU-419812">
    <property type="pathway name" value="Calcitonin-like ligand receptors"/>
</dbReference>
<dbReference type="BioGRID-ORCS" id="15874">
    <property type="hits" value="2 hits in 78 CRISPR screens"/>
</dbReference>
<dbReference type="ChiTaRS" id="Iapp">
    <property type="organism name" value="mouse"/>
</dbReference>
<dbReference type="PRO" id="PR:P12968"/>
<dbReference type="Proteomes" id="UP000000589">
    <property type="component" value="Chromosome 6"/>
</dbReference>
<dbReference type="RNAct" id="P12968">
    <property type="molecule type" value="protein"/>
</dbReference>
<dbReference type="Bgee" id="ENSMUSG00000041681">
    <property type="expression patterns" value="Expressed in islet of Langerhans and 78 other cell types or tissues"/>
</dbReference>
<dbReference type="GO" id="GO:0005829">
    <property type="term" value="C:cytosol"/>
    <property type="evidence" value="ECO:0000304"/>
    <property type="project" value="Reactome"/>
</dbReference>
<dbReference type="GO" id="GO:0005615">
    <property type="term" value="C:extracellular space"/>
    <property type="evidence" value="ECO:0000314"/>
    <property type="project" value="MGI"/>
</dbReference>
<dbReference type="GO" id="GO:0043025">
    <property type="term" value="C:neuronal cell body"/>
    <property type="evidence" value="ECO:0000314"/>
    <property type="project" value="MGI"/>
</dbReference>
<dbReference type="GO" id="GO:0005179">
    <property type="term" value="F:hormone activity"/>
    <property type="evidence" value="ECO:0000250"/>
    <property type="project" value="UniProtKB"/>
</dbReference>
<dbReference type="GO" id="GO:0042802">
    <property type="term" value="F:identical protein binding"/>
    <property type="evidence" value="ECO:0007669"/>
    <property type="project" value="Ensembl"/>
</dbReference>
<dbReference type="GO" id="GO:0048018">
    <property type="term" value="F:receptor ligand activity"/>
    <property type="evidence" value="ECO:0000250"/>
    <property type="project" value="UniProtKB"/>
</dbReference>
<dbReference type="GO" id="GO:0150059">
    <property type="term" value="P:amylin receptor 1 signaling pathway"/>
    <property type="evidence" value="ECO:0007669"/>
    <property type="project" value="Ensembl"/>
</dbReference>
<dbReference type="GO" id="GO:0150060">
    <property type="term" value="P:amylin receptor 2 signaling pathway"/>
    <property type="evidence" value="ECO:0007669"/>
    <property type="project" value="Ensembl"/>
</dbReference>
<dbReference type="GO" id="GO:0150061">
    <property type="term" value="P:amylin receptor 3 signaling pathway"/>
    <property type="evidence" value="ECO:0007669"/>
    <property type="project" value="Ensembl"/>
</dbReference>
<dbReference type="GO" id="GO:0097647">
    <property type="term" value="P:amylin receptor signaling pathway"/>
    <property type="evidence" value="ECO:0000250"/>
    <property type="project" value="UniProtKB"/>
</dbReference>
<dbReference type="GO" id="GO:0045453">
    <property type="term" value="P:bone resorption"/>
    <property type="evidence" value="ECO:0000315"/>
    <property type="project" value="MGI"/>
</dbReference>
<dbReference type="GO" id="GO:0042755">
    <property type="term" value="P:eating behavior"/>
    <property type="evidence" value="ECO:0007669"/>
    <property type="project" value="Ensembl"/>
</dbReference>
<dbReference type="GO" id="GO:0045779">
    <property type="term" value="P:negative regulation of bone resorption"/>
    <property type="evidence" value="ECO:0000315"/>
    <property type="project" value="MGI"/>
</dbReference>
<dbReference type="GO" id="GO:0045671">
    <property type="term" value="P:negative regulation of osteoclast differentiation"/>
    <property type="evidence" value="ECO:0000315"/>
    <property type="project" value="MGI"/>
</dbReference>
<dbReference type="GO" id="GO:0030316">
    <property type="term" value="P:osteoclast differentiation"/>
    <property type="evidence" value="ECO:0000315"/>
    <property type="project" value="MGI"/>
</dbReference>
<dbReference type="GO" id="GO:0050850">
    <property type="term" value="P:positive regulation of calcium-mediated signaling"/>
    <property type="evidence" value="ECO:0007669"/>
    <property type="project" value="Ensembl"/>
</dbReference>
<dbReference type="GO" id="GO:0141163">
    <property type="term" value="P:positive regulation of cAMP/PKA signal transduction"/>
    <property type="evidence" value="ECO:0007669"/>
    <property type="project" value="Ensembl"/>
</dbReference>
<dbReference type="GO" id="GO:0019233">
    <property type="term" value="P:sensory perception of pain"/>
    <property type="evidence" value="ECO:0000315"/>
    <property type="project" value="MGI"/>
</dbReference>
<dbReference type="Gene3D" id="6.10.250.2190">
    <property type="match status" value="1"/>
</dbReference>
<dbReference type="InterPro" id="IPR021117">
    <property type="entry name" value="Calcitonin-like"/>
</dbReference>
<dbReference type="InterPro" id="IPR021116">
    <property type="entry name" value="Calcitonin/adrenomedullin"/>
</dbReference>
<dbReference type="InterPro" id="IPR018360">
    <property type="entry name" value="Calcitonin_CS"/>
</dbReference>
<dbReference type="InterPro" id="IPR001693">
    <property type="entry name" value="Calcitonin_peptide-like"/>
</dbReference>
<dbReference type="InterPro" id="IPR000443">
    <property type="entry name" value="IAPP"/>
</dbReference>
<dbReference type="PANTHER" id="PTHR10505">
    <property type="entry name" value="CALCITONIN-RELATED"/>
    <property type="match status" value="1"/>
</dbReference>
<dbReference type="PANTHER" id="PTHR10505:SF4">
    <property type="entry name" value="ISLET AMYLOID POLYPEPTIDE"/>
    <property type="match status" value="1"/>
</dbReference>
<dbReference type="Pfam" id="PF00214">
    <property type="entry name" value="Calc_CGRP_IAPP"/>
    <property type="match status" value="1"/>
</dbReference>
<dbReference type="PRINTS" id="PR00818">
    <property type="entry name" value="ISLETAMYLOID"/>
</dbReference>
<dbReference type="SMART" id="SM00113">
    <property type="entry name" value="CALCITONIN"/>
    <property type="match status" value="1"/>
</dbReference>
<dbReference type="PROSITE" id="PS00258">
    <property type="entry name" value="CALCITONIN"/>
    <property type="match status" value="1"/>
</dbReference>
<feature type="signal peptide" evidence="4">
    <location>
        <begin position="1"/>
        <end position="23"/>
    </location>
</feature>
<feature type="propeptide" id="PRO_0000004112">
    <location>
        <begin position="24"/>
        <end position="35"/>
    </location>
</feature>
<feature type="peptide" id="PRO_0000004113" description="Islet amyloid polypeptide">
    <location>
        <begin position="38"/>
        <end position="74"/>
    </location>
</feature>
<feature type="propeptide" id="PRO_0000004114">
    <location>
        <begin position="78"/>
        <end position="93"/>
    </location>
</feature>
<feature type="region of interest" description="Disordered" evidence="5">
    <location>
        <begin position="64"/>
        <end position="93"/>
    </location>
</feature>
<feature type="compositionally biased region" description="Basic and acidic residues" evidence="5">
    <location>
        <begin position="83"/>
        <end position="93"/>
    </location>
</feature>
<feature type="modified residue" description="Tyrosine amide" evidence="1">
    <location>
        <position position="74"/>
    </location>
</feature>
<feature type="disulfide bond" evidence="3">
    <location>
        <begin position="39"/>
        <end position="44"/>
    </location>
</feature>
<proteinExistence type="inferred from homology"/>
<keyword id="KW-0027">Amidation</keyword>
<keyword id="KW-0034">Amyloid</keyword>
<keyword id="KW-0165">Cleavage on pair of basic residues</keyword>
<keyword id="KW-1015">Disulfide bond</keyword>
<keyword id="KW-0372">Hormone</keyword>
<keyword id="KW-1185">Reference proteome</keyword>
<keyword id="KW-0964">Secreted</keyword>
<keyword id="KW-0732">Signal</keyword>
<organism>
    <name type="scientific">Mus musculus</name>
    <name type="common">Mouse</name>
    <dbReference type="NCBI Taxonomy" id="10090"/>
    <lineage>
        <taxon>Eukaryota</taxon>
        <taxon>Metazoa</taxon>
        <taxon>Chordata</taxon>
        <taxon>Craniata</taxon>
        <taxon>Vertebrata</taxon>
        <taxon>Euteleostomi</taxon>
        <taxon>Mammalia</taxon>
        <taxon>Eutheria</taxon>
        <taxon>Euarchontoglires</taxon>
        <taxon>Glires</taxon>
        <taxon>Rodentia</taxon>
        <taxon>Myomorpha</taxon>
        <taxon>Muroidea</taxon>
        <taxon>Muridae</taxon>
        <taxon>Murinae</taxon>
        <taxon>Mus</taxon>
        <taxon>Mus</taxon>
    </lineage>
</organism>